<keyword id="KW-0143">Chaperone</keyword>
<keyword id="KW-0963">Cytoplasm</keyword>
<keyword id="KW-1185">Reference proteome</keyword>
<keyword id="KW-0690">Ribosome biogenesis</keyword>
<keyword id="KW-0698">rRNA processing</keyword>
<accession>Q63S31</accession>
<name>RIMM_BURPS</name>
<dbReference type="EMBL" id="BX571965">
    <property type="protein sequence ID" value="CAH36497.1"/>
    <property type="status" value="ALT_INIT"/>
    <property type="molecule type" value="Genomic_DNA"/>
</dbReference>
<dbReference type="RefSeq" id="WP_004527496.1">
    <property type="nucleotide sequence ID" value="NZ_CP009538.1"/>
</dbReference>
<dbReference type="RefSeq" id="YP_109086.1">
    <property type="nucleotide sequence ID" value="NC_006350.1"/>
</dbReference>
<dbReference type="SMR" id="Q63S31"/>
<dbReference type="STRING" id="272560.BPSL2491"/>
<dbReference type="KEGG" id="bps:BPSL2491"/>
<dbReference type="PATRIC" id="fig|272560.51.peg.2891"/>
<dbReference type="eggNOG" id="COG0806">
    <property type="taxonomic scope" value="Bacteria"/>
</dbReference>
<dbReference type="Proteomes" id="UP000000605">
    <property type="component" value="Chromosome 1"/>
</dbReference>
<dbReference type="GO" id="GO:0005737">
    <property type="term" value="C:cytoplasm"/>
    <property type="evidence" value="ECO:0007669"/>
    <property type="project" value="UniProtKB-SubCell"/>
</dbReference>
<dbReference type="GO" id="GO:0005840">
    <property type="term" value="C:ribosome"/>
    <property type="evidence" value="ECO:0007669"/>
    <property type="project" value="InterPro"/>
</dbReference>
<dbReference type="GO" id="GO:0043022">
    <property type="term" value="F:ribosome binding"/>
    <property type="evidence" value="ECO:0007669"/>
    <property type="project" value="InterPro"/>
</dbReference>
<dbReference type="GO" id="GO:0042274">
    <property type="term" value="P:ribosomal small subunit biogenesis"/>
    <property type="evidence" value="ECO:0007669"/>
    <property type="project" value="UniProtKB-UniRule"/>
</dbReference>
<dbReference type="GO" id="GO:0006364">
    <property type="term" value="P:rRNA processing"/>
    <property type="evidence" value="ECO:0007669"/>
    <property type="project" value="UniProtKB-UniRule"/>
</dbReference>
<dbReference type="Gene3D" id="2.30.30.240">
    <property type="entry name" value="PRC-barrel domain"/>
    <property type="match status" value="1"/>
</dbReference>
<dbReference type="Gene3D" id="2.40.30.60">
    <property type="entry name" value="RimM"/>
    <property type="match status" value="1"/>
</dbReference>
<dbReference type="HAMAP" id="MF_00014">
    <property type="entry name" value="Ribosome_mat_RimM"/>
    <property type="match status" value="1"/>
</dbReference>
<dbReference type="InterPro" id="IPR011033">
    <property type="entry name" value="PRC_barrel-like_sf"/>
</dbReference>
<dbReference type="InterPro" id="IPR056792">
    <property type="entry name" value="PRC_RimM"/>
</dbReference>
<dbReference type="InterPro" id="IPR011961">
    <property type="entry name" value="RimM"/>
</dbReference>
<dbReference type="InterPro" id="IPR002676">
    <property type="entry name" value="RimM_N"/>
</dbReference>
<dbReference type="InterPro" id="IPR036976">
    <property type="entry name" value="RimM_N_sf"/>
</dbReference>
<dbReference type="InterPro" id="IPR009000">
    <property type="entry name" value="Transl_B-barrel_sf"/>
</dbReference>
<dbReference type="NCBIfam" id="TIGR02273">
    <property type="entry name" value="16S_RimM"/>
    <property type="match status" value="1"/>
</dbReference>
<dbReference type="PANTHER" id="PTHR33692">
    <property type="entry name" value="RIBOSOME MATURATION FACTOR RIMM"/>
    <property type="match status" value="1"/>
</dbReference>
<dbReference type="PANTHER" id="PTHR33692:SF1">
    <property type="entry name" value="RIBOSOME MATURATION FACTOR RIMM"/>
    <property type="match status" value="1"/>
</dbReference>
<dbReference type="Pfam" id="PF24986">
    <property type="entry name" value="PRC_RimM"/>
    <property type="match status" value="1"/>
</dbReference>
<dbReference type="Pfam" id="PF01782">
    <property type="entry name" value="RimM"/>
    <property type="match status" value="1"/>
</dbReference>
<dbReference type="SUPFAM" id="SSF50346">
    <property type="entry name" value="PRC-barrel domain"/>
    <property type="match status" value="1"/>
</dbReference>
<dbReference type="SUPFAM" id="SSF50447">
    <property type="entry name" value="Translation proteins"/>
    <property type="match status" value="1"/>
</dbReference>
<reference key="1">
    <citation type="journal article" date="2004" name="Proc. Natl. Acad. Sci. U.S.A.">
        <title>Genomic plasticity of the causative agent of melioidosis, Burkholderia pseudomallei.</title>
        <authorList>
            <person name="Holden M.T.G."/>
            <person name="Titball R.W."/>
            <person name="Peacock S.J."/>
            <person name="Cerdeno-Tarraga A.-M."/>
            <person name="Atkins T."/>
            <person name="Crossman L.C."/>
            <person name="Pitt T."/>
            <person name="Churcher C."/>
            <person name="Mungall K.L."/>
            <person name="Bentley S.D."/>
            <person name="Sebaihia M."/>
            <person name="Thomson N.R."/>
            <person name="Bason N."/>
            <person name="Beacham I.R."/>
            <person name="Brooks K."/>
            <person name="Brown K.A."/>
            <person name="Brown N.F."/>
            <person name="Challis G.L."/>
            <person name="Cherevach I."/>
            <person name="Chillingworth T."/>
            <person name="Cronin A."/>
            <person name="Crossett B."/>
            <person name="Davis P."/>
            <person name="DeShazer D."/>
            <person name="Feltwell T."/>
            <person name="Fraser A."/>
            <person name="Hance Z."/>
            <person name="Hauser H."/>
            <person name="Holroyd S."/>
            <person name="Jagels K."/>
            <person name="Keith K.E."/>
            <person name="Maddison M."/>
            <person name="Moule S."/>
            <person name="Price C."/>
            <person name="Quail M.A."/>
            <person name="Rabbinowitsch E."/>
            <person name="Rutherford K."/>
            <person name="Sanders M."/>
            <person name="Simmonds M."/>
            <person name="Songsivilai S."/>
            <person name="Stevens K."/>
            <person name="Tumapa S."/>
            <person name="Vesaratchavest M."/>
            <person name="Whitehead S."/>
            <person name="Yeats C."/>
            <person name="Barrell B.G."/>
            <person name="Oyston P.C.F."/>
            <person name="Parkhill J."/>
        </authorList>
    </citation>
    <scope>NUCLEOTIDE SEQUENCE [LARGE SCALE GENOMIC DNA]</scope>
    <source>
        <strain>K96243</strain>
    </source>
</reference>
<organism>
    <name type="scientific">Burkholderia pseudomallei (strain K96243)</name>
    <dbReference type="NCBI Taxonomy" id="272560"/>
    <lineage>
        <taxon>Bacteria</taxon>
        <taxon>Pseudomonadati</taxon>
        <taxon>Pseudomonadota</taxon>
        <taxon>Betaproteobacteria</taxon>
        <taxon>Burkholderiales</taxon>
        <taxon>Burkholderiaceae</taxon>
        <taxon>Burkholderia</taxon>
        <taxon>pseudomallei group</taxon>
    </lineage>
</organism>
<protein>
    <recommendedName>
        <fullName evidence="1">Ribosome maturation factor RimM</fullName>
    </recommendedName>
</protein>
<proteinExistence type="inferred from homology"/>
<comment type="function">
    <text evidence="1">An accessory protein needed during the final step in the assembly of 30S ribosomal subunit, possibly for assembly of the head region. Essential for efficient processing of 16S rRNA. May be needed both before and after RbfA during the maturation of 16S rRNA. It has affinity for free ribosomal 30S subunits but not for 70S ribosomes.</text>
</comment>
<comment type="subunit">
    <text evidence="1">Binds ribosomal protein uS19.</text>
</comment>
<comment type="subcellular location">
    <subcellularLocation>
        <location evidence="1">Cytoplasm</location>
    </subcellularLocation>
</comment>
<comment type="domain">
    <text evidence="1">The PRC barrel domain binds ribosomal protein uS19.</text>
</comment>
<comment type="similarity">
    <text evidence="1">Belongs to the RimM family.</text>
</comment>
<comment type="sequence caution" evidence="2">
    <conflict type="erroneous initiation">
        <sequence resource="EMBL-CDS" id="CAH36497"/>
    </conflict>
</comment>
<feature type="chain" id="PRO_0000163270" description="Ribosome maturation factor RimM">
    <location>
        <begin position="1"/>
        <end position="229"/>
    </location>
</feature>
<feature type="domain" description="PRC barrel" evidence="1">
    <location>
        <begin position="148"/>
        <end position="229"/>
    </location>
</feature>
<sequence length="229" mass="24450">MAGHDSGNAKRGRSPSFGVFVRKPVERASAKGTSDGAVDSQAIRIDAAQSWPDDAVEVGAVVDAYGLKGWVKLAAHAGAGRGGDALLKARDWWLQKGAERKFARVTQAKLHGDTVVAHPDGSVDRDTALALRGARVFVRRGDFPALAADEFYWVDLIGLDVVNEAGVALGKIADMIDNGVHSIMRVEYPATGKDGRPKTGERLIPFVGVYVKAVEQAAGRVVVDWEADY</sequence>
<evidence type="ECO:0000255" key="1">
    <source>
        <dbReference type="HAMAP-Rule" id="MF_00014"/>
    </source>
</evidence>
<evidence type="ECO:0000305" key="2"/>
<gene>
    <name evidence="1" type="primary">rimM</name>
    <name type="ordered locus">BPSL2491</name>
</gene>